<name>YIDD_BORBR</name>
<protein>
    <recommendedName>
        <fullName evidence="1">Putative membrane protein insertion efficiency factor</fullName>
    </recommendedName>
</protein>
<gene>
    <name type="ordered locus">BB4992</name>
</gene>
<proteinExistence type="inferred from homology"/>
<reference key="1">
    <citation type="journal article" date="2003" name="Nat. Genet.">
        <title>Comparative analysis of the genome sequences of Bordetella pertussis, Bordetella parapertussis and Bordetella bronchiseptica.</title>
        <authorList>
            <person name="Parkhill J."/>
            <person name="Sebaihia M."/>
            <person name="Preston A."/>
            <person name="Murphy L.D."/>
            <person name="Thomson N.R."/>
            <person name="Harris D.E."/>
            <person name="Holden M.T.G."/>
            <person name="Churcher C.M."/>
            <person name="Bentley S.D."/>
            <person name="Mungall K.L."/>
            <person name="Cerdeno-Tarraga A.-M."/>
            <person name="Temple L."/>
            <person name="James K.D."/>
            <person name="Harris B."/>
            <person name="Quail M.A."/>
            <person name="Achtman M."/>
            <person name="Atkin R."/>
            <person name="Baker S."/>
            <person name="Basham D."/>
            <person name="Bason N."/>
            <person name="Cherevach I."/>
            <person name="Chillingworth T."/>
            <person name="Collins M."/>
            <person name="Cronin A."/>
            <person name="Davis P."/>
            <person name="Doggett J."/>
            <person name="Feltwell T."/>
            <person name="Goble A."/>
            <person name="Hamlin N."/>
            <person name="Hauser H."/>
            <person name="Holroyd S."/>
            <person name="Jagels K."/>
            <person name="Leather S."/>
            <person name="Moule S."/>
            <person name="Norberczak H."/>
            <person name="O'Neil S."/>
            <person name="Ormond D."/>
            <person name="Price C."/>
            <person name="Rabbinowitsch E."/>
            <person name="Rutter S."/>
            <person name="Sanders M."/>
            <person name="Saunders D."/>
            <person name="Seeger K."/>
            <person name="Sharp S."/>
            <person name="Simmonds M."/>
            <person name="Skelton J."/>
            <person name="Squares R."/>
            <person name="Squares S."/>
            <person name="Stevens K."/>
            <person name="Unwin L."/>
            <person name="Whitehead S."/>
            <person name="Barrell B.G."/>
            <person name="Maskell D.J."/>
        </authorList>
    </citation>
    <scope>NUCLEOTIDE SEQUENCE [LARGE SCALE GENOMIC DNA]</scope>
    <source>
        <strain>ATCC BAA-588 / NCTC 13252 / RB50</strain>
    </source>
</reference>
<feature type="chain" id="PRO_0000171796" description="Putative membrane protein insertion efficiency factor">
    <location>
        <begin position="1"/>
        <end position="90"/>
    </location>
</feature>
<keyword id="KW-0997">Cell inner membrane</keyword>
<keyword id="KW-1003">Cell membrane</keyword>
<keyword id="KW-0472">Membrane</keyword>
<accession>Q7WDJ6</accession>
<comment type="function">
    <text evidence="1">Could be involved in insertion of integral membrane proteins into the membrane.</text>
</comment>
<comment type="subcellular location">
    <subcellularLocation>
        <location evidence="1">Cell inner membrane</location>
        <topology evidence="1">Peripheral membrane protein</topology>
        <orientation evidence="1">Cytoplasmic side</orientation>
    </subcellularLocation>
</comment>
<comment type="similarity">
    <text evidence="1">Belongs to the UPF0161 family.</text>
</comment>
<dbReference type="EMBL" id="BX640452">
    <property type="protein sequence ID" value="CAE35356.1"/>
    <property type="molecule type" value="Genomic_DNA"/>
</dbReference>
<dbReference type="KEGG" id="bbr:BB4992"/>
<dbReference type="eggNOG" id="COG0759">
    <property type="taxonomic scope" value="Bacteria"/>
</dbReference>
<dbReference type="HOGENOM" id="CLU_144811_2_2_4"/>
<dbReference type="Proteomes" id="UP000001027">
    <property type="component" value="Chromosome"/>
</dbReference>
<dbReference type="GO" id="GO:0005886">
    <property type="term" value="C:plasma membrane"/>
    <property type="evidence" value="ECO:0007669"/>
    <property type="project" value="UniProtKB-SubCell"/>
</dbReference>
<dbReference type="HAMAP" id="MF_00386">
    <property type="entry name" value="UPF0161_YidD"/>
    <property type="match status" value="1"/>
</dbReference>
<dbReference type="InterPro" id="IPR002696">
    <property type="entry name" value="Membr_insert_effic_factor_YidD"/>
</dbReference>
<dbReference type="NCBIfam" id="TIGR00278">
    <property type="entry name" value="membrane protein insertion efficiency factor YidD"/>
    <property type="match status" value="1"/>
</dbReference>
<dbReference type="PANTHER" id="PTHR33383">
    <property type="entry name" value="MEMBRANE PROTEIN INSERTION EFFICIENCY FACTOR-RELATED"/>
    <property type="match status" value="1"/>
</dbReference>
<dbReference type="PANTHER" id="PTHR33383:SF1">
    <property type="entry name" value="MEMBRANE PROTEIN INSERTION EFFICIENCY FACTOR-RELATED"/>
    <property type="match status" value="1"/>
</dbReference>
<dbReference type="Pfam" id="PF01809">
    <property type="entry name" value="YidD"/>
    <property type="match status" value="1"/>
</dbReference>
<dbReference type="SMART" id="SM01234">
    <property type="entry name" value="Haemolytic"/>
    <property type="match status" value="1"/>
</dbReference>
<evidence type="ECO:0000255" key="1">
    <source>
        <dbReference type="HAMAP-Rule" id="MF_00386"/>
    </source>
</evidence>
<organism>
    <name type="scientific">Bordetella bronchiseptica (strain ATCC BAA-588 / NCTC 13252 / RB50)</name>
    <name type="common">Alcaligenes bronchisepticus</name>
    <dbReference type="NCBI Taxonomy" id="257310"/>
    <lineage>
        <taxon>Bacteria</taxon>
        <taxon>Pseudomonadati</taxon>
        <taxon>Pseudomonadota</taxon>
        <taxon>Betaproteobacteria</taxon>
        <taxon>Burkholderiales</taxon>
        <taxon>Alcaligenaceae</taxon>
        <taxon>Bordetella</taxon>
    </lineage>
</organism>
<sequence>MIRRLLIAPIRFYRYFLSPWVGRQCRFTPTCSAYAIEAIERHGAWRGLWLAARRIGRCHPWSPGGYDPVPPGHGAGAQACCAHRHRTEPD</sequence>